<sequence length="169" mass="19059">MKPSSSNSRSKGHAKARRKTREELDQEARDRKRQKKRRGHAPGSRAAGGNTTSGSKGQNAPKDPRIGSKTPIPLGVTEKVTKQHKPKSEKPMLSPQAELELLETDERLDALLERLEAGETLSAEEQSWVDAKLDRIDELMQKLGLSYDDDEEEEEDEKQEDMMRLLRGN</sequence>
<feature type="chain" id="PRO_1000064431" description="Der GTPase-activating protein YihI">
    <location>
        <begin position="1"/>
        <end position="169"/>
    </location>
</feature>
<feature type="region of interest" description="Disordered" evidence="2">
    <location>
        <begin position="1"/>
        <end position="98"/>
    </location>
</feature>
<feature type="region of interest" description="Disordered" evidence="2">
    <location>
        <begin position="144"/>
        <end position="169"/>
    </location>
</feature>
<feature type="compositionally biased region" description="Basic residues" evidence="2">
    <location>
        <begin position="10"/>
        <end position="19"/>
    </location>
</feature>
<feature type="compositionally biased region" description="Basic and acidic residues" evidence="2">
    <location>
        <begin position="20"/>
        <end position="30"/>
    </location>
</feature>
<feature type="compositionally biased region" description="Basic residues" evidence="2">
    <location>
        <begin position="31"/>
        <end position="40"/>
    </location>
</feature>
<feature type="compositionally biased region" description="Polar residues" evidence="2">
    <location>
        <begin position="49"/>
        <end position="58"/>
    </location>
</feature>
<feature type="compositionally biased region" description="Acidic residues" evidence="2">
    <location>
        <begin position="147"/>
        <end position="159"/>
    </location>
</feature>
<feature type="compositionally biased region" description="Basic and acidic residues" evidence="2">
    <location>
        <begin position="160"/>
        <end position="169"/>
    </location>
</feature>
<accession>Q31UC9</accession>
<gene>
    <name evidence="1" type="primary">yihI</name>
    <name type="ordered locus">SBO_3878</name>
</gene>
<dbReference type="EMBL" id="CP000036">
    <property type="protein sequence ID" value="ABB68329.1"/>
    <property type="molecule type" value="Genomic_DNA"/>
</dbReference>
<dbReference type="RefSeq" id="WP_001295266.1">
    <property type="nucleotide sequence ID" value="NC_007613.1"/>
</dbReference>
<dbReference type="SMR" id="Q31UC9"/>
<dbReference type="GeneID" id="75204333"/>
<dbReference type="KEGG" id="sbo:SBO_3878"/>
<dbReference type="HOGENOM" id="CLU_094104_2_0_6"/>
<dbReference type="Proteomes" id="UP000007067">
    <property type="component" value="Chromosome"/>
</dbReference>
<dbReference type="GO" id="GO:0005096">
    <property type="term" value="F:GTPase activator activity"/>
    <property type="evidence" value="ECO:0007669"/>
    <property type="project" value="UniProtKB-KW"/>
</dbReference>
<dbReference type="GO" id="GO:0042254">
    <property type="term" value="P:ribosome biogenesis"/>
    <property type="evidence" value="ECO:0007669"/>
    <property type="project" value="UniProtKB-KW"/>
</dbReference>
<dbReference type="HAMAP" id="MF_01058">
    <property type="entry name" value="GAP_YihI"/>
    <property type="match status" value="1"/>
</dbReference>
<dbReference type="InterPro" id="IPR007336">
    <property type="entry name" value="YihI"/>
</dbReference>
<dbReference type="NCBIfam" id="NF003560">
    <property type="entry name" value="PRK05244.1-1"/>
    <property type="match status" value="1"/>
</dbReference>
<dbReference type="Pfam" id="PF04220">
    <property type="entry name" value="YihI"/>
    <property type="match status" value="1"/>
</dbReference>
<name>YIHI_SHIBS</name>
<protein>
    <recommendedName>
        <fullName evidence="1">Der GTPase-activating protein YihI</fullName>
    </recommendedName>
</protein>
<keyword id="KW-0343">GTPase activation</keyword>
<keyword id="KW-0690">Ribosome biogenesis</keyword>
<evidence type="ECO:0000255" key="1">
    <source>
        <dbReference type="HAMAP-Rule" id="MF_01058"/>
    </source>
</evidence>
<evidence type="ECO:0000256" key="2">
    <source>
        <dbReference type="SAM" id="MobiDB-lite"/>
    </source>
</evidence>
<proteinExistence type="inferred from homology"/>
<comment type="function">
    <text evidence="1">A GTPase-activating protein (GAP) that modifies Der/EngA GTPase function. May play a role in ribosome biogenesis.</text>
</comment>
<comment type="subunit">
    <text evidence="1">Interacts with Der.</text>
</comment>
<comment type="similarity">
    <text evidence="1">Belongs to the YihI family.</text>
</comment>
<reference key="1">
    <citation type="journal article" date="2005" name="Nucleic Acids Res.">
        <title>Genome dynamics and diversity of Shigella species, the etiologic agents of bacillary dysentery.</title>
        <authorList>
            <person name="Yang F."/>
            <person name="Yang J."/>
            <person name="Zhang X."/>
            <person name="Chen L."/>
            <person name="Jiang Y."/>
            <person name="Yan Y."/>
            <person name="Tang X."/>
            <person name="Wang J."/>
            <person name="Xiong Z."/>
            <person name="Dong J."/>
            <person name="Xue Y."/>
            <person name="Zhu Y."/>
            <person name="Xu X."/>
            <person name="Sun L."/>
            <person name="Chen S."/>
            <person name="Nie H."/>
            <person name="Peng J."/>
            <person name="Xu J."/>
            <person name="Wang Y."/>
            <person name="Yuan Z."/>
            <person name="Wen Y."/>
            <person name="Yao Z."/>
            <person name="Shen Y."/>
            <person name="Qiang B."/>
            <person name="Hou Y."/>
            <person name="Yu J."/>
            <person name="Jin Q."/>
        </authorList>
    </citation>
    <scope>NUCLEOTIDE SEQUENCE [LARGE SCALE GENOMIC DNA]</scope>
    <source>
        <strain>Sb227</strain>
    </source>
</reference>
<organism>
    <name type="scientific">Shigella boydii serotype 4 (strain Sb227)</name>
    <dbReference type="NCBI Taxonomy" id="300268"/>
    <lineage>
        <taxon>Bacteria</taxon>
        <taxon>Pseudomonadati</taxon>
        <taxon>Pseudomonadota</taxon>
        <taxon>Gammaproteobacteria</taxon>
        <taxon>Enterobacterales</taxon>
        <taxon>Enterobacteriaceae</taxon>
        <taxon>Shigella</taxon>
    </lineage>
</organism>